<keyword id="KW-0067">ATP-binding</keyword>
<keyword id="KW-0418">Kinase</keyword>
<keyword id="KW-0547">Nucleotide-binding</keyword>
<keyword id="KW-1185">Reference proteome</keyword>
<keyword id="KW-0808">Transferase</keyword>
<name>KT3K_ECO57</name>
<organism>
    <name type="scientific">Escherichia coli O157:H7</name>
    <dbReference type="NCBI Taxonomy" id="83334"/>
    <lineage>
        <taxon>Bacteria</taxon>
        <taxon>Pseudomonadati</taxon>
        <taxon>Pseudomonadota</taxon>
        <taxon>Gammaproteobacteria</taxon>
        <taxon>Enterobacterales</taxon>
        <taxon>Enterobacteriaceae</taxon>
        <taxon>Escherichia</taxon>
    </lineage>
</organism>
<proteinExistence type="inferred from homology"/>
<evidence type="ECO:0000250" key="1">
    <source>
        <dbReference type="UniProtKB" id="P9WI99"/>
    </source>
</evidence>
<evidence type="ECO:0000250" key="2">
    <source>
        <dbReference type="UniProtKB" id="Q9H479"/>
    </source>
</evidence>
<evidence type="ECO:0000250" key="3">
    <source>
        <dbReference type="UniProtKB" id="Q9HA64"/>
    </source>
</evidence>
<evidence type="ECO:0000305" key="4"/>
<dbReference type="EC" id="2.7.1.-" evidence="2"/>
<dbReference type="EMBL" id="AE005174">
    <property type="protein sequence ID" value="AAG56711.1"/>
    <property type="molecule type" value="Genomic_DNA"/>
</dbReference>
<dbReference type="EMBL" id="BA000007">
    <property type="protein sequence ID" value="BAB35854.1"/>
    <property type="molecule type" value="Genomic_DNA"/>
</dbReference>
<dbReference type="PIR" id="C85781">
    <property type="entry name" value="C85781"/>
</dbReference>
<dbReference type="PIR" id="G90932">
    <property type="entry name" value="G90932"/>
</dbReference>
<dbReference type="RefSeq" id="NP_310458.1">
    <property type="nucleotide sequence ID" value="NC_002695.1"/>
</dbReference>
<dbReference type="RefSeq" id="WP_000267654.1">
    <property type="nucleotide sequence ID" value="NZ_VOAI01000007.1"/>
</dbReference>
<dbReference type="SMR" id="P58065"/>
<dbReference type="STRING" id="155864.Z2754"/>
<dbReference type="GeneID" id="913778"/>
<dbReference type="KEGG" id="ece:Z2754"/>
<dbReference type="KEGG" id="ecs:ECs_2431"/>
<dbReference type="PATRIC" id="fig|386585.9.peg.2545"/>
<dbReference type="eggNOG" id="COG3001">
    <property type="taxonomic scope" value="Bacteria"/>
</dbReference>
<dbReference type="HOGENOM" id="CLU_036517_0_0_6"/>
<dbReference type="OMA" id="RECDIAM"/>
<dbReference type="Proteomes" id="UP000000558">
    <property type="component" value="Chromosome"/>
</dbReference>
<dbReference type="Proteomes" id="UP000002519">
    <property type="component" value="Chromosome"/>
</dbReference>
<dbReference type="GO" id="GO:0005524">
    <property type="term" value="F:ATP binding"/>
    <property type="evidence" value="ECO:0007669"/>
    <property type="project" value="UniProtKB-KW"/>
</dbReference>
<dbReference type="GO" id="GO:0016301">
    <property type="term" value="F:kinase activity"/>
    <property type="evidence" value="ECO:0007669"/>
    <property type="project" value="UniProtKB-KW"/>
</dbReference>
<dbReference type="FunFam" id="3.30.200.20:FF:000176">
    <property type="entry name" value="Fructosamine kinase family protein"/>
    <property type="match status" value="1"/>
</dbReference>
<dbReference type="FunFam" id="3.90.1200.10:FF:000001">
    <property type="entry name" value="Fructosamine kinase family protein"/>
    <property type="match status" value="1"/>
</dbReference>
<dbReference type="Gene3D" id="3.90.1200.10">
    <property type="match status" value="1"/>
</dbReference>
<dbReference type="Gene3D" id="3.30.200.20">
    <property type="entry name" value="Phosphorylase Kinase, domain 1"/>
    <property type="match status" value="1"/>
</dbReference>
<dbReference type="InterPro" id="IPR016477">
    <property type="entry name" value="Fructo-/Ketosamine-3-kinase"/>
</dbReference>
<dbReference type="InterPro" id="IPR011009">
    <property type="entry name" value="Kinase-like_dom_sf"/>
</dbReference>
<dbReference type="PANTHER" id="PTHR12149">
    <property type="entry name" value="FRUCTOSAMINE 3 KINASE-RELATED PROTEIN"/>
    <property type="match status" value="1"/>
</dbReference>
<dbReference type="PANTHER" id="PTHR12149:SF8">
    <property type="entry name" value="PROTEIN-RIBULOSAMINE 3-KINASE"/>
    <property type="match status" value="1"/>
</dbReference>
<dbReference type="Pfam" id="PF03881">
    <property type="entry name" value="Fructosamin_kin"/>
    <property type="match status" value="1"/>
</dbReference>
<dbReference type="PIRSF" id="PIRSF006221">
    <property type="entry name" value="Ketosamine-3-kinase"/>
    <property type="match status" value="1"/>
</dbReference>
<dbReference type="SUPFAM" id="SSF56112">
    <property type="entry name" value="Protein kinase-like (PK-like)"/>
    <property type="match status" value="1"/>
</dbReference>
<protein>
    <recommendedName>
        <fullName>Probable ketoamine kinase YniA</fullName>
        <ecNumber evidence="2">2.7.1.-</ecNumber>
    </recommendedName>
</protein>
<reference key="1">
    <citation type="journal article" date="2001" name="Nature">
        <title>Genome sequence of enterohaemorrhagic Escherichia coli O157:H7.</title>
        <authorList>
            <person name="Perna N.T."/>
            <person name="Plunkett G. III"/>
            <person name="Burland V."/>
            <person name="Mau B."/>
            <person name="Glasner J.D."/>
            <person name="Rose D.J."/>
            <person name="Mayhew G.F."/>
            <person name="Evans P.S."/>
            <person name="Gregor J."/>
            <person name="Kirkpatrick H.A."/>
            <person name="Posfai G."/>
            <person name="Hackett J."/>
            <person name="Klink S."/>
            <person name="Boutin A."/>
            <person name="Shao Y."/>
            <person name="Miller L."/>
            <person name="Grotbeck E.J."/>
            <person name="Davis N.W."/>
            <person name="Lim A."/>
            <person name="Dimalanta E.T."/>
            <person name="Potamousis K."/>
            <person name="Apodaca J."/>
            <person name="Anantharaman T.S."/>
            <person name="Lin J."/>
            <person name="Yen G."/>
            <person name="Schwartz D.C."/>
            <person name="Welch R.A."/>
            <person name="Blattner F.R."/>
        </authorList>
    </citation>
    <scope>NUCLEOTIDE SEQUENCE [LARGE SCALE GENOMIC DNA]</scope>
    <source>
        <strain>O157:H7 / EDL933 / ATCC 700927 / EHEC</strain>
    </source>
</reference>
<reference key="2">
    <citation type="journal article" date="2001" name="DNA Res.">
        <title>Complete genome sequence of enterohemorrhagic Escherichia coli O157:H7 and genomic comparison with a laboratory strain K-12.</title>
        <authorList>
            <person name="Hayashi T."/>
            <person name="Makino K."/>
            <person name="Ohnishi M."/>
            <person name="Kurokawa K."/>
            <person name="Ishii K."/>
            <person name="Yokoyama K."/>
            <person name="Han C.-G."/>
            <person name="Ohtsubo E."/>
            <person name="Nakayama K."/>
            <person name="Murata T."/>
            <person name="Tanaka M."/>
            <person name="Tobe T."/>
            <person name="Iida T."/>
            <person name="Takami H."/>
            <person name="Honda T."/>
            <person name="Sasakawa C."/>
            <person name="Ogasawara N."/>
            <person name="Yasunaga T."/>
            <person name="Kuhara S."/>
            <person name="Shiba T."/>
            <person name="Hattori M."/>
            <person name="Shinagawa H."/>
        </authorList>
    </citation>
    <scope>NUCLEOTIDE SEQUENCE [LARGE SCALE GENOMIC DNA]</scope>
    <source>
        <strain>O157:H7 / Sakai / RIMD 0509952 / EHEC</strain>
    </source>
</reference>
<sequence>MWQAISRLLSEQLGEGEIELRNELPGGEVHAAWHLRYAGHDFFVKCDERELLPGFTAEADQLELLSRSKTVTVPKVWAVGADRDYSFLVMDYLPPRPLDAHSAFILGQQIARLHQWSDQPQFGLDFDNSLSTTPQPNTWQRRWSTFFAEQRIGWQLELAAEKGIAFGNIDAIVEHIQQRLASHQPQPSLLHGDLWSGNCALGPDGPYIFDPACYWGDRECDLAMLPLHTEQPPQIYDGYQSVSPLPADFLERQPVYQLYTLLNRARLFGGQHLVIAQQSLDRLLAA</sequence>
<gene>
    <name type="primary">yniA</name>
    <name type="ordered locus">Z2754</name>
    <name type="ordered locus">ECs2431</name>
</gene>
<comment type="function">
    <text evidence="2">Ketoamine kinase that phosphorylates ketoamines on the third carbon of the sugar moiety to generate ketoamine 3-phosphate.</text>
</comment>
<comment type="similarity">
    <text evidence="4">Belongs to the fructosamine kinase family.</text>
</comment>
<accession>P58065</accession>
<feature type="chain" id="PRO_0000216343" description="Probable ketoamine kinase YniA">
    <location>
        <begin position="1"/>
        <end position="286"/>
    </location>
</feature>
<feature type="active site" description="Proton acceptor" evidence="1">
    <location>
        <position position="193"/>
    </location>
</feature>
<feature type="binding site" evidence="3">
    <location>
        <begin position="91"/>
        <end position="93"/>
    </location>
    <ligand>
        <name>ATP</name>
        <dbReference type="ChEBI" id="CHEBI:30616"/>
    </ligand>
</feature>